<reference key="1">
    <citation type="journal article" date="2006" name="J. Bacteriol.">
        <title>Pathogenomic sequence analysis of Bacillus cereus and Bacillus thuringiensis isolates closely related to Bacillus anthracis.</title>
        <authorList>
            <person name="Han C.S."/>
            <person name="Xie G."/>
            <person name="Challacombe J.F."/>
            <person name="Altherr M.R."/>
            <person name="Bhotika S.S."/>
            <person name="Bruce D."/>
            <person name="Campbell C.S."/>
            <person name="Campbell M.L."/>
            <person name="Chen J."/>
            <person name="Chertkov O."/>
            <person name="Cleland C."/>
            <person name="Dimitrijevic M."/>
            <person name="Doggett N.A."/>
            <person name="Fawcett J.J."/>
            <person name="Glavina T."/>
            <person name="Goodwin L.A."/>
            <person name="Hill K.K."/>
            <person name="Hitchcock P."/>
            <person name="Jackson P.J."/>
            <person name="Keim P."/>
            <person name="Kewalramani A.R."/>
            <person name="Longmire J."/>
            <person name="Lucas S."/>
            <person name="Malfatti S."/>
            <person name="McMurry K."/>
            <person name="Meincke L.J."/>
            <person name="Misra M."/>
            <person name="Moseman B.L."/>
            <person name="Mundt M."/>
            <person name="Munk A.C."/>
            <person name="Okinaka R.T."/>
            <person name="Parson-Quintana B."/>
            <person name="Reilly L.P."/>
            <person name="Richardson P."/>
            <person name="Robinson D.L."/>
            <person name="Rubin E."/>
            <person name="Saunders E."/>
            <person name="Tapia R."/>
            <person name="Tesmer J.G."/>
            <person name="Thayer N."/>
            <person name="Thompson L.S."/>
            <person name="Tice H."/>
            <person name="Ticknor L.O."/>
            <person name="Wills P.L."/>
            <person name="Brettin T.S."/>
            <person name="Gilna P."/>
        </authorList>
    </citation>
    <scope>NUCLEOTIDE SEQUENCE [LARGE SCALE GENOMIC DNA]</scope>
    <source>
        <strain>97-27</strain>
    </source>
</reference>
<evidence type="ECO:0000255" key="1">
    <source>
        <dbReference type="HAMAP-Rule" id="MF_00339"/>
    </source>
</evidence>
<sequence>MKRIGVLTSGGDSPGMNAAIRAVVRKAIFHDIEVYGIYHGYAGLISGHIEKLELGSVGDIIHRGGTKLYTARCPEFKDPEVRLKGIEQLKKHGIEGLVVIGGDGSYQGAKKLTEQGFPCVGVPGTIDNDIPGTDFTIGFDTALNTVIDAIDKIRDTATSHERTYVIEVMGRHAGDIALWAGLADGAETILIPEEEYDMEDVIARLKRGSERGKKHSIIVVAEGVGSAIDIGKHIEEATNFDTRVTVLGHVQRGGSPSAQDRVLASRLGARAVELLIAGKGGRCVGIQDNKLVDHDIIEALAQKHTIDKDMYQLSKELSI</sequence>
<keyword id="KW-0021">Allosteric enzyme</keyword>
<keyword id="KW-0067">ATP-binding</keyword>
<keyword id="KW-0963">Cytoplasm</keyword>
<keyword id="KW-0324">Glycolysis</keyword>
<keyword id="KW-0418">Kinase</keyword>
<keyword id="KW-0460">Magnesium</keyword>
<keyword id="KW-0479">Metal-binding</keyword>
<keyword id="KW-0547">Nucleotide-binding</keyword>
<keyword id="KW-0808">Transferase</keyword>
<organism>
    <name type="scientific">Bacillus thuringiensis subsp. konkukian (strain 97-27)</name>
    <dbReference type="NCBI Taxonomy" id="281309"/>
    <lineage>
        <taxon>Bacteria</taxon>
        <taxon>Bacillati</taxon>
        <taxon>Bacillota</taxon>
        <taxon>Bacilli</taxon>
        <taxon>Bacillales</taxon>
        <taxon>Bacillaceae</taxon>
        <taxon>Bacillus</taxon>
        <taxon>Bacillus cereus group</taxon>
    </lineage>
</organism>
<dbReference type="EC" id="2.7.1.11" evidence="1"/>
<dbReference type="EMBL" id="AE017355">
    <property type="protein sequence ID" value="AAT63551.1"/>
    <property type="molecule type" value="Genomic_DNA"/>
</dbReference>
<dbReference type="RefSeq" id="WP_000821163.1">
    <property type="nucleotide sequence ID" value="NC_005957.1"/>
</dbReference>
<dbReference type="RefSeq" id="YP_038643.1">
    <property type="nucleotide sequence ID" value="NC_005957.1"/>
</dbReference>
<dbReference type="SMR" id="Q6HCT3"/>
<dbReference type="GeneID" id="93006511"/>
<dbReference type="KEGG" id="btk:BT9727_4328"/>
<dbReference type="PATRIC" id="fig|281309.8.peg.4614"/>
<dbReference type="HOGENOM" id="CLU_020655_0_1_9"/>
<dbReference type="UniPathway" id="UPA00109">
    <property type="reaction ID" value="UER00182"/>
</dbReference>
<dbReference type="Proteomes" id="UP000001301">
    <property type="component" value="Chromosome"/>
</dbReference>
<dbReference type="GO" id="GO:0005945">
    <property type="term" value="C:6-phosphofructokinase complex"/>
    <property type="evidence" value="ECO:0007669"/>
    <property type="project" value="TreeGrafter"/>
</dbReference>
<dbReference type="GO" id="GO:0003872">
    <property type="term" value="F:6-phosphofructokinase activity"/>
    <property type="evidence" value="ECO:0007669"/>
    <property type="project" value="UniProtKB-UniRule"/>
</dbReference>
<dbReference type="GO" id="GO:0016208">
    <property type="term" value="F:AMP binding"/>
    <property type="evidence" value="ECO:0007669"/>
    <property type="project" value="TreeGrafter"/>
</dbReference>
<dbReference type="GO" id="GO:0005524">
    <property type="term" value="F:ATP binding"/>
    <property type="evidence" value="ECO:0007669"/>
    <property type="project" value="UniProtKB-KW"/>
</dbReference>
<dbReference type="GO" id="GO:0070095">
    <property type="term" value="F:fructose-6-phosphate binding"/>
    <property type="evidence" value="ECO:0007669"/>
    <property type="project" value="TreeGrafter"/>
</dbReference>
<dbReference type="GO" id="GO:0042802">
    <property type="term" value="F:identical protein binding"/>
    <property type="evidence" value="ECO:0007669"/>
    <property type="project" value="TreeGrafter"/>
</dbReference>
<dbReference type="GO" id="GO:0046872">
    <property type="term" value="F:metal ion binding"/>
    <property type="evidence" value="ECO:0007669"/>
    <property type="project" value="UniProtKB-KW"/>
</dbReference>
<dbReference type="GO" id="GO:0048029">
    <property type="term" value="F:monosaccharide binding"/>
    <property type="evidence" value="ECO:0007669"/>
    <property type="project" value="TreeGrafter"/>
</dbReference>
<dbReference type="GO" id="GO:0061621">
    <property type="term" value="P:canonical glycolysis"/>
    <property type="evidence" value="ECO:0007669"/>
    <property type="project" value="TreeGrafter"/>
</dbReference>
<dbReference type="GO" id="GO:0030388">
    <property type="term" value="P:fructose 1,6-bisphosphate metabolic process"/>
    <property type="evidence" value="ECO:0007669"/>
    <property type="project" value="TreeGrafter"/>
</dbReference>
<dbReference type="GO" id="GO:0006002">
    <property type="term" value="P:fructose 6-phosphate metabolic process"/>
    <property type="evidence" value="ECO:0007669"/>
    <property type="project" value="InterPro"/>
</dbReference>
<dbReference type="CDD" id="cd00763">
    <property type="entry name" value="Bacterial_PFK"/>
    <property type="match status" value="1"/>
</dbReference>
<dbReference type="FunFam" id="3.40.50.450:FF:000001">
    <property type="entry name" value="ATP-dependent 6-phosphofructokinase"/>
    <property type="match status" value="1"/>
</dbReference>
<dbReference type="FunFam" id="3.40.50.460:FF:000002">
    <property type="entry name" value="ATP-dependent 6-phosphofructokinase"/>
    <property type="match status" value="1"/>
</dbReference>
<dbReference type="Gene3D" id="3.40.50.450">
    <property type="match status" value="1"/>
</dbReference>
<dbReference type="Gene3D" id="3.40.50.460">
    <property type="entry name" value="Phosphofructokinase domain"/>
    <property type="match status" value="1"/>
</dbReference>
<dbReference type="HAMAP" id="MF_00339">
    <property type="entry name" value="Phosphofructokinase_I_B1"/>
    <property type="match status" value="1"/>
</dbReference>
<dbReference type="InterPro" id="IPR022953">
    <property type="entry name" value="ATP_PFK"/>
</dbReference>
<dbReference type="InterPro" id="IPR012003">
    <property type="entry name" value="ATP_PFK_prok-type"/>
</dbReference>
<dbReference type="InterPro" id="IPR012828">
    <property type="entry name" value="PFKA_ATP_prok"/>
</dbReference>
<dbReference type="InterPro" id="IPR015912">
    <property type="entry name" value="Phosphofructokinase_CS"/>
</dbReference>
<dbReference type="InterPro" id="IPR000023">
    <property type="entry name" value="Phosphofructokinase_dom"/>
</dbReference>
<dbReference type="InterPro" id="IPR035966">
    <property type="entry name" value="PKF_sf"/>
</dbReference>
<dbReference type="NCBIfam" id="TIGR02482">
    <property type="entry name" value="PFKA_ATP"/>
    <property type="match status" value="1"/>
</dbReference>
<dbReference type="NCBIfam" id="NF002872">
    <property type="entry name" value="PRK03202.1"/>
    <property type="match status" value="1"/>
</dbReference>
<dbReference type="PANTHER" id="PTHR13697:SF4">
    <property type="entry name" value="ATP-DEPENDENT 6-PHOSPHOFRUCTOKINASE"/>
    <property type="match status" value="1"/>
</dbReference>
<dbReference type="PANTHER" id="PTHR13697">
    <property type="entry name" value="PHOSPHOFRUCTOKINASE"/>
    <property type="match status" value="1"/>
</dbReference>
<dbReference type="Pfam" id="PF00365">
    <property type="entry name" value="PFK"/>
    <property type="match status" value="1"/>
</dbReference>
<dbReference type="PIRSF" id="PIRSF000532">
    <property type="entry name" value="ATP_PFK_prok"/>
    <property type="match status" value="1"/>
</dbReference>
<dbReference type="PRINTS" id="PR00476">
    <property type="entry name" value="PHFRCTKINASE"/>
</dbReference>
<dbReference type="SUPFAM" id="SSF53784">
    <property type="entry name" value="Phosphofructokinase"/>
    <property type="match status" value="1"/>
</dbReference>
<dbReference type="PROSITE" id="PS00433">
    <property type="entry name" value="PHOSPHOFRUCTOKINASE"/>
    <property type="match status" value="1"/>
</dbReference>
<feature type="chain" id="PRO_1000059743" description="ATP-dependent 6-phosphofructokinase">
    <location>
        <begin position="1"/>
        <end position="319"/>
    </location>
</feature>
<feature type="active site" description="Proton acceptor" evidence="1">
    <location>
        <position position="127"/>
    </location>
</feature>
<feature type="binding site" evidence="1">
    <location>
        <position position="11"/>
    </location>
    <ligand>
        <name>ATP</name>
        <dbReference type="ChEBI" id="CHEBI:30616"/>
    </ligand>
</feature>
<feature type="binding site" evidence="1">
    <location>
        <begin position="21"/>
        <end position="25"/>
    </location>
    <ligand>
        <name>ADP</name>
        <dbReference type="ChEBI" id="CHEBI:456216"/>
        <note>allosteric activator; ligand shared between dimeric partners</note>
    </ligand>
</feature>
<feature type="binding site" evidence="1">
    <location>
        <begin position="72"/>
        <end position="73"/>
    </location>
    <ligand>
        <name>ATP</name>
        <dbReference type="ChEBI" id="CHEBI:30616"/>
    </ligand>
</feature>
<feature type="binding site" evidence="1">
    <location>
        <begin position="102"/>
        <end position="105"/>
    </location>
    <ligand>
        <name>ATP</name>
        <dbReference type="ChEBI" id="CHEBI:30616"/>
    </ligand>
</feature>
<feature type="binding site" evidence="1">
    <location>
        <position position="103"/>
    </location>
    <ligand>
        <name>Mg(2+)</name>
        <dbReference type="ChEBI" id="CHEBI:18420"/>
        <note>catalytic</note>
    </ligand>
</feature>
<feature type="binding site" description="in other chain" evidence="1">
    <location>
        <begin position="125"/>
        <end position="127"/>
    </location>
    <ligand>
        <name>substrate</name>
        <note>ligand shared between dimeric partners</note>
    </ligand>
</feature>
<feature type="binding site" description="in other chain" evidence="1">
    <location>
        <position position="154"/>
    </location>
    <ligand>
        <name>ADP</name>
        <dbReference type="ChEBI" id="CHEBI:456216"/>
        <note>allosteric activator; ligand shared between dimeric partners</note>
    </ligand>
</feature>
<feature type="binding site" evidence="1">
    <location>
        <position position="162"/>
    </location>
    <ligand>
        <name>substrate</name>
        <note>ligand shared between dimeric partners</note>
    </ligand>
</feature>
<feature type="binding site" description="in other chain" evidence="1">
    <location>
        <begin position="169"/>
        <end position="171"/>
    </location>
    <ligand>
        <name>substrate</name>
        <note>ligand shared between dimeric partners</note>
    </ligand>
</feature>
<feature type="binding site" description="in other chain" evidence="1">
    <location>
        <begin position="185"/>
        <end position="187"/>
    </location>
    <ligand>
        <name>ADP</name>
        <dbReference type="ChEBI" id="CHEBI:456216"/>
        <note>allosteric activator; ligand shared between dimeric partners</note>
    </ligand>
</feature>
<feature type="binding site" description="in other chain" evidence="1">
    <location>
        <position position="211"/>
    </location>
    <ligand>
        <name>ADP</name>
        <dbReference type="ChEBI" id="CHEBI:456216"/>
        <note>allosteric activator; ligand shared between dimeric partners</note>
    </ligand>
</feature>
<feature type="binding site" description="in other chain" evidence="1">
    <location>
        <begin position="213"/>
        <end position="215"/>
    </location>
    <ligand>
        <name>ADP</name>
        <dbReference type="ChEBI" id="CHEBI:456216"/>
        <note>allosteric activator; ligand shared between dimeric partners</note>
    </ligand>
</feature>
<feature type="binding site" description="in other chain" evidence="1">
    <location>
        <position position="222"/>
    </location>
    <ligand>
        <name>substrate</name>
        <note>ligand shared between dimeric partners</note>
    </ligand>
</feature>
<feature type="binding site" evidence="1">
    <location>
        <position position="243"/>
    </location>
    <ligand>
        <name>substrate</name>
        <note>ligand shared between dimeric partners</note>
    </ligand>
</feature>
<feature type="binding site" description="in other chain" evidence="1">
    <location>
        <begin position="249"/>
        <end position="252"/>
    </location>
    <ligand>
        <name>substrate</name>
        <note>ligand shared between dimeric partners</note>
    </ligand>
</feature>
<proteinExistence type="inferred from homology"/>
<accession>Q6HCT3</accession>
<name>PFKA_BACHK</name>
<gene>
    <name evidence="1" type="primary">pfkA</name>
    <name type="ordered locus">BT9727_4328</name>
</gene>
<comment type="function">
    <text evidence="1">Catalyzes the phosphorylation of D-fructose 6-phosphate to fructose 1,6-bisphosphate by ATP, the first committing step of glycolysis.</text>
</comment>
<comment type="catalytic activity">
    <reaction evidence="1">
        <text>beta-D-fructose 6-phosphate + ATP = beta-D-fructose 1,6-bisphosphate + ADP + H(+)</text>
        <dbReference type="Rhea" id="RHEA:16109"/>
        <dbReference type="ChEBI" id="CHEBI:15378"/>
        <dbReference type="ChEBI" id="CHEBI:30616"/>
        <dbReference type="ChEBI" id="CHEBI:32966"/>
        <dbReference type="ChEBI" id="CHEBI:57634"/>
        <dbReference type="ChEBI" id="CHEBI:456216"/>
        <dbReference type="EC" id="2.7.1.11"/>
    </reaction>
</comment>
<comment type="cofactor">
    <cofactor evidence="1">
        <name>Mg(2+)</name>
        <dbReference type="ChEBI" id="CHEBI:18420"/>
    </cofactor>
</comment>
<comment type="activity regulation">
    <text evidence="1">Allosterically activated by ADP and other diphosphonucleosides, and allosterically inhibited by phosphoenolpyruvate.</text>
</comment>
<comment type="pathway">
    <text evidence="1">Carbohydrate degradation; glycolysis; D-glyceraldehyde 3-phosphate and glycerone phosphate from D-glucose: step 3/4.</text>
</comment>
<comment type="subunit">
    <text evidence="1">Homotetramer.</text>
</comment>
<comment type="subcellular location">
    <subcellularLocation>
        <location evidence="1">Cytoplasm</location>
    </subcellularLocation>
</comment>
<comment type="similarity">
    <text evidence="1">Belongs to the phosphofructokinase type A (PFKA) family. ATP-dependent PFK group I subfamily. Prokaryotic clade 'B1' sub-subfamily.</text>
</comment>
<protein>
    <recommendedName>
        <fullName evidence="1">ATP-dependent 6-phosphofructokinase</fullName>
        <shortName evidence="1">ATP-PFK</shortName>
        <shortName evidence="1">Phosphofructokinase</shortName>
        <ecNumber evidence="1">2.7.1.11</ecNumber>
    </recommendedName>
    <alternativeName>
        <fullName evidence="1">Phosphohexokinase</fullName>
    </alternativeName>
</protein>